<gene>
    <name type="ordered locus">MIMI_R854</name>
</gene>
<evidence type="ECO:0000250" key="1">
    <source>
        <dbReference type="UniProtKB" id="Q7DF80"/>
    </source>
</evidence>
<evidence type="ECO:0000256" key="2">
    <source>
        <dbReference type="SAM" id="MobiDB-lite"/>
    </source>
</evidence>
<evidence type="ECO:0000305" key="3"/>
<comment type="similarity">
    <text evidence="3">In the central section; belongs to the transposase 2 family.</text>
</comment>
<comment type="similarity">
    <text evidence="3">In the C-terminal section; belongs to the transposase 35 family.</text>
</comment>
<accession>Q5UQQ9</accession>
<organism>
    <name type="scientific">Acanthamoeba polyphaga mimivirus</name>
    <name type="common">APMV</name>
    <dbReference type="NCBI Taxonomy" id="212035"/>
    <lineage>
        <taxon>Viruses</taxon>
        <taxon>Varidnaviria</taxon>
        <taxon>Bamfordvirae</taxon>
        <taxon>Nucleocytoviricota</taxon>
        <taxon>Megaviricetes</taxon>
        <taxon>Imitervirales</taxon>
        <taxon>Mimiviridae</taxon>
        <taxon>Megamimivirinae</taxon>
        <taxon>Mimivirus</taxon>
        <taxon>Mimivirus bradfordmassiliense</taxon>
    </lineage>
</organism>
<organismHost>
    <name type="scientific">Acanthamoeba polyphaga</name>
    <name type="common">Amoeba</name>
    <dbReference type="NCBI Taxonomy" id="5757"/>
</organismHost>
<sequence>MKEAVKTVKPKVPAKKRIVTGSKTKKKVFVKKKPPAKKPPDKKPLKKTTKKTVKKVINRPKSIHIPNKDLKIFKWIPTPKKEFTEIETNSWYEHRKFENPNKSPIQTYNKIVPVVPPESIKQQNLANKRKKTNRPIVFISSEKIRIYPTKEQQKILQTWFRLFACMYNSSIDYINSKKVVLESGRINVAATRKVCNKISVRKALKTIRDNLIKSTNPSIMTHIMDEAIGLACSNYKTCLTNYIEGQIKKFDIKPWSISKRRKIIVIEPGYFKGNSFCPTVFPKMKSSKPLIMIDKTVTLQYDSDTRKYILFVPRVTPKYSVNKEKNSCGIDPGLRDFLTVYSENETQSICPIEIVVNTTKNEYKKIDKINEIIKTKPNLNSKRKKKLNRGLRKYHRRVTNKMKDMHYKVSHELVNTFDKICIGKLNVKSILSKANTVLKSALKRKLATLSFYRFTQRLTHMGYKYGTEVVNVNEYLTTKTCSNCGKIKDLGASKIYECESCGMYADRDENAAKNILKVGLKPWYKQK</sequence>
<proteinExistence type="inferred from homology"/>
<keyword id="KW-0233">DNA recombination</keyword>
<keyword id="KW-0238">DNA-binding</keyword>
<keyword id="KW-0479">Metal-binding</keyword>
<keyword id="KW-1185">Reference proteome</keyword>
<keyword id="KW-0815">Transposition</keyword>
<keyword id="KW-0862">Zinc</keyword>
<reference key="1">
    <citation type="journal article" date="2004" name="Science">
        <title>The 1.2-megabase genome sequence of Mimivirus.</title>
        <authorList>
            <person name="Raoult D."/>
            <person name="Audic S."/>
            <person name="Robert C."/>
            <person name="Abergel C."/>
            <person name="Renesto P."/>
            <person name="Ogata H."/>
            <person name="La Scola B."/>
            <person name="Susan M."/>
            <person name="Claverie J.-M."/>
        </authorList>
    </citation>
    <scope>NUCLEOTIDE SEQUENCE [LARGE SCALE GENOMIC DNA]</scope>
    <source>
        <strain>Rowbotham-Bradford</strain>
    </source>
</reference>
<feature type="chain" id="PRO_0000075542" description="TnpB-like protein R854">
    <location>
        <begin position="1"/>
        <end position="527"/>
    </location>
</feature>
<feature type="region of interest" description="Disordered" evidence="2">
    <location>
        <begin position="21"/>
        <end position="50"/>
    </location>
</feature>
<feature type="compositionally biased region" description="Basic residues" evidence="2">
    <location>
        <begin position="21"/>
        <end position="36"/>
    </location>
</feature>
<feature type="binding site" evidence="1">
    <location>
        <position position="481"/>
    </location>
    <ligand>
        <name>Zn(2+)</name>
        <dbReference type="ChEBI" id="CHEBI:29105"/>
    </ligand>
</feature>
<feature type="binding site" evidence="1">
    <location>
        <position position="484"/>
    </location>
    <ligand>
        <name>Zn(2+)</name>
        <dbReference type="ChEBI" id="CHEBI:29105"/>
    </ligand>
</feature>
<feature type="binding site" evidence="1">
    <location>
        <position position="498"/>
    </location>
    <ligand>
        <name>Zn(2+)</name>
        <dbReference type="ChEBI" id="CHEBI:29105"/>
    </ligand>
</feature>
<feature type="binding site" evidence="1">
    <location>
        <position position="501"/>
    </location>
    <ligand>
        <name>Zn(2+)</name>
        <dbReference type="ChEBI" id="CHEBI:29105"/>
    </ligand>
</feature>
<protein>
    <recommendedName>
        <fullName>TnpB-like protein R854</fullName>
    </recommendedName>
</protein>
<dbReference type="EMBL" id="AY653733">
    <property type="protein sequence ID" value="AAV51112.1"/>
    <property type="molecule type" value="Genomic_DNA"/>
</dbReference>
<dbReference type="SMR" id="Q5UQQ9"/>
<dbReference type="KEGG" id="vg:9925515"/>
<dbReference type="OrthoDB" id="3397at10239"/>
<dbReference type="Proteomes" id="UP000001134">
    <property type="component" value="Genome"/>
</dbReference>
<dbReference type="GO" id="GO:0003677">
    <property type="term" value="F:DNA binding"/>
    <property type="evidence" value="ECO:0007669"/>
    <property type="project" value="UniProtKB-KW"/>
</dbReference>
<dbReference type="GO" id="GO:0046872">
    <property type="term" value="F:metal ion binding"/>
    <property type="evidence" value="ECO:0007669"/>
    <property type="project" value="UniProtKB-KW"/>
</dbReference>
<dbReference type="GO" id="GO:0006310">
    <property type="term" value="P:DNA recombination"/>
    <property type="evidence" value="ECO:0007669"/>
    <property type="project" value="UniProtKB-KW"/>
</dbReference>
<dbReference type="GO" id="GO:0032196">
    <property type="term" value="P:transposition"/>
    <property type="evidence" value="ECO:0007669"/>
    <property type="project" value="UniProtKB-KW"/>
</dbReference>
<dbReference type="InterPro" id="IPR010095">
    <property type="entry name" value="Cas12f1-like_TNB"/>
</dbReference>
<dbReference type="InterPro" id="IPR051491">
    <property type="entry name" value="Recombinase/Transposase-rel"/>
</dbReference>
<dbReference type="InterPro" id="IPR001959">
    <property type="entry name" value="Transposase"/>
</dbReference>
<dbReference type="InterPro" id="IPR021027">
    <property type="entry name" value="Transposase_put_HTH"/>
</dbReference>
<dbReference type="NCBIfam" id="NF040570">
    <property type="entry name" value="guided_TnpB"/>
    <property type="match status" value="1"/>
</dbReference>
<dbReference type="NCBIfam" id="TIGR01766">
    <property type="entry name" value="IS200/IS605 family accessory protein TnpB-like domain"/>
    <property type="match status" value="1"/>
</dbReference>
<dbReference type="PANTHER" id="PTHR36172">
    <property type="match status" value="1"/>
</dbReference>
<dbReference type="PANTHER" id="PTHR36172:SF1">
    <property type="entry name" value="RESOLVASE-RELATED"/>
    <property type="match status" value="1"/>
</dbReference>
<dbReference type="Pfam" id="PF07282">
    <property type="entry name" value="Cas12f1-like_TNB"/>
    <property type="match status" value="1"/>
</dbReference>
<dbReference type="Pfam" id="PF12323">
    <property type="entry name" value="HTH_OrfB_IS605"/>
    <property type="match status" value="1"/>
</dbReference>
<dbReference type="Pfam" id="PF01385">
    <property type="entry name" value="OrfB_IS605"/>
    <property type="match status" value="1"/>
</dbReference>
<name>YR854_MIMIV</name>